<keyword id="KW-0965">Cell junction</keyword>
<keyword id="KW-1003">Cell membrane</keyword>
<keyword id="KW-1015">Disulfide bond</keyword>
<keyword id="KW-0393">Immunoglobulin domain</keyword>
<keyword id="KW-0472">Membrane</keyword>
<keyword id="KW-1185">Reference proteome</keyword>
<keyword id="KW-0677">Repeat</keyword>
<keyword id="KW-0732">Signal</keyword>
<keyword id="KW-0796">Tight junction</keyword>
<keyword id="KW-0812">Transmembrane</keyword>
<keyword id="KW-1133">Transmembrane helix</keyword>
<evidence type="ECO:0000250" key="1">
    <source>
        <dbReference type="UniProtKB" id="P57087"/>
    </source>
</evidence>
<evidence type="ECO:0000250" key="2">
    <source>
        <dbReference type="UniProtKB" id="Q9JI59"/>
    </source>
</evidence>
<evidence type="ECO:0000255" key="3"/>
<evidence type="ECO:0000255" key="4">
    <source>
        <dbReference type="PROSITE-ProRule" id="PRU00114"/>
    </source>
</evidence>
<evidence type="ECO:0000256" key="5">
    <source>
        <dbReference type="SAM" id="MobiDB-lite"/>
    </source>
</evidence>
<evidence type="ECO:0000269" key="6">
    <source>
    </source>
</evidence>
<evidence type="ECO:0000303" key="7">
    <source>
    </source>
</evidence>
<evidence type="ECO:0000305" key="8"/>
<proteinExistence type="evidence at transcript level"/>
<accession>A0A0R4IGV4</accession>
<gene>
    <name type="primary">jam2a</name>
    <name evidence="7" type="synonym">jamb</name>
</gene>
<sequence length="307" mass="34651">MLVCVSLLILIHSVPVSPVTVSSRNPKVEVHEFSDAELSCEFKTEKDTNPRIEWKRKDKEKDVSFVYYGERFVGPFQDRADIEGATVRLRRVTQADAGEYRCEVSAPSDSISLGETNVTLRVLVPPQTPSCDVPSSALTGSQVELRCRDRHSIPPAVYTWYKDNRALPIRHPNATYTVNEFTGVLIPQSHYNPGTVCQHCMYHPNYHIPNTQLTTTFQTHDLNVAAVVSAVVLVCVILFLCAFGVCLAHRQGYFSRHRGRSFWIPHCHGVTHISSQNLNPSEHTQHSGYSHPPKEPQDFKHTQSFML</sequence>
<name>JAM2A_DANRE</name>
<protein>
    <recommendedName>
        <fullName evidence="7">Junctional adhesion molecule 2A</fullName>
        <shortName evidence="7">Jam2a</shortName>
    </recommendedName>
    <alternativeName>
        <fullName evidence="7">Junctional adhesion molecule B</fullName>
        <shortName evidence="7">JAM-B</shortName>
    </alternativeName>
</protein>
<feature type="signal peptide" evidence="3">
    <location>
        <begin position="1"/>
        <end position="18"/>
    </location>
</feature>
<feature type="chain" id="PRO_5015344232" description="Junctional adhesion molecule 2A" evidence="3">
    <location>
        <begin position="19"/>
        <end position="307"/>
    </location>
</feature>
<feature type="topological domain" description="Extracellular" evidence="8">
    <location>
        <begin position="19"/>
        <end position="226"/>
    </location>
</feature>
<feature type="transmembrane region" description="Helical" evidence="3">
    <location>
        <begin position="227"/>
        <end position="247"/>
    </location>
</feature>
<feature type="topological domain" description="Cytoplasmic" evidence="8">
    <location>
        <begin position="248"/>
        <end position="307"/>
    </location>
</feature>
<feature type="domain" description="Ig-like V-type" evidence="4">
    <location>
        <begin position="19"/>
        <end position="112"/>
    </location>
</feature>
<feature type="domain" description="Ig-like C2-type" evidence="4">
    <location>
        <begin position="126"/>
        <end position="225"/>
    </location>
</feature>
<feature type="region of interest" description="Disordered" evidence="5">
    <location>
        <begin position="278"/>
        <end position="307"/>
    </location>
</feature>
<feature type="compositionally biased region" description="Polar residues" evidence="5">
    <location>
        <begin position="278"/>
        <end position="288"/>
    </location>
</feature>
<feature type="compositionally biased region" description="Basic and acidic residues" evidence="5">
    <location>
        <begin position="292"/>
        <end position="301"/>
    </location>
</feature>
<feature type="disulfide bond" evidence="4">
    <location>
        <begin position="40"/>
        <end position="102"/>
    </location>
</feature>
<feature type="disulfide bond" evidence="4">
    <location>
        <begin position="147"/>
        <end position="197"/>
    </location>
</feature>
<organism>
    <name type="scientific">Danio rerio</name>
    <name type="common">Zebrafish</name>
    <name type="synonym">Brachydanio rerio</name>
    <dbReference type="NCBI Taxonomy" id="7955"/>
    <lineage>
        <taxon>Eukaryota</taxon>
        <taxon>Metazoa</taxon>
        <taxon>Chordata</taxon>
        <taxon>Craniata</taxon>
        <taxon>Vertebrata</taxon>
        <taxon>Euteleostomi</taxon>
        <taxon>Actinopterygii</taxon>
        <taxon>Neopterygii</taxon>
        <taxon>Teleostei</taxon>
        <taxon>Ostariophysi</taxon>
        <taxon>Cypriniformes</taxon>
        <taxon>Danionidae</taxon>
        <taxon>Danioninae</taxon>
        <taxon>Danio</taxon>
    </lineage>
</organism>
<dbReference type="EMBL" id="CU571081">
    <property type="status" value="NOT_ANNOTATED_CDS"/>
    <property type="molecule type" value="Genomic_DNA"/>
</dbReference>
<dbReference type="SMR" id="A0A0R4IGV4"/>
<dbReference type="FunCoup" id="A0A0R4IGV4">
    <property type="interactions" value="5"/>
</dbReference>
<dbReference type="STRING" id="7955.ENSDARP00000132646"/>
<dbReference type="Ensembl" id="ENSDART00000166731">
    <property type="protein sequence ID" value="ENSDARP00000132646"/>
    <property type="gene ID" value="ENSDARG00000058996"/>
</dbReference>
<dbReference type="InParanoid" id="A0A0R4IGV4"/>
<dbReference type="OMA" id="APEYVWF"/>
<dbReference type="Reactome" id="R-DRE-202733">
    <property type="pathway name" value="Cell surface interactions at the vascular wall"/>
</dbReference>
<dbReference type="Reactome" id="R-DRE-216083">
    <property type="pathway name" value="Integrin cell surface interactions"/>
</dbReference>
<dbReference type="PRO" id="PR:A0A0R4IGV4"/>
<dbReference type="Proteomes" id="UP000000437">
    <property type="component" value="Unplaced"/>
</dbReference>
<dbReference type="Bgee" id="ENSDARG00000058996">
    <property type="expression patterns" value="Expressed in mature ovarian follicle and 48 other cell types or tissues"/>
</dbReference>
<dbReference type="ExpressionAtlas" id="A0A0R4IGV4">
    <property type="expression patterns" value="baseline and differential"/>
</dbReference>
<dbReference type="GO" id="GO:0005923">
    <property type="term" value="C:bicellular tight junction"/>
    <property type="evidence" value="ECO:0007669"/>
    <property type="project" value="UniProtKB-SubCell"/>
</dbReference>
<dbReference type="GO" id="GO:0005886">
    <property type="term" value="C:plasma membrane"/>
    <property type="evidence" value="ECO:0000250"/>
    <property type="project" value="UniProtKB"/>
</dbReference>
<dbReference type="GO" id="GO:0098636">
    <property type="term" value="C:protein complex involved in cell adhesion"/>
    <property type="evidence" value="ECO:0000250"/>
    <property type="project" value="UniProtKB"/>
</dbReference>
<dbReference type="GO" id="GO:0070160">
    <property type="term" value="C:tight junction"/>
    <property type="evidence" value="ECO:0000250"/>
    <property type="project" value="UniProtKB"/>
</dbReference>
<dbReference type="GO" id="GO:0098609">
    <property type="term" value="P:cell-cell adhesion"/>
    <property type="evidence" value="ECO:0000250"/>
    <property type="project" value="UniProtKB"/>
</dbReference>
<dbReference type="FunFam" id="2.60.40.10:FF:004403">
    <property type="match status" value="1"/>
</dbReference>
<dbReference type="FunFam" id="2.60.40.10:FF:003604">
    <property type="entry name" value="Junctional adhesion molecule 2a"/>
    <property type="match status" value="1"/>
</dbReference>
<dbReference type="Gene3D" id="2.60.40.10">
    <property type="entry name" value="Immunoglobulins"/>
    <property type="match status" value="2"/>
</dbReference>
<dbReference type="InterPro" id="IPR007110">
    <property type="entry name" value="Ig-like_dom"/>
</dbReference>
<dbReference type="InterPro" id="IPR036179">
    <property type="entry name" value="Ig-like_dom_sf"/>
</dbReference>
<dbReference type="InterPro" id="IPR013783">
    <property type="entry name" value="Ig-like_fold"/>
</dbReference>
<dbReference type="InterPro" id="IPR003599">
    <property type="entry name" value="Ig_sub"/>
</dbReference>
<dbReference type="InterPro" id="IPR003598">
    <property type="entry name" value="Ig_sub2"/>
</dbReference>
<dbReference type="InterPro" id="IPR013106">
    <property type="entry name" value="Ig_V-set"/>
</dbReference>
<dbReference type="InterPro" id="IPR042625">
    <property type="entry name" value="JAM2"/>
</dbReference>
<dbReference type="PANTHER" id="PTHR44663:SF3">
    <property type="entry name" value="JUNCTIONAL ADHESION MOLECULE 2A"/>
    <property type="match status" value="1"/>
</dbReference>
<dbReference type="PANTHER" id="PTHR44663">
    <property type="entry name" value="JUNCTIONAL ADHESION MOLECULE B"/>
    <property type="match status" value="1"/>
</dbReference>
<dbReference type="Pfam" id="PF07686">
    <property type="entry name" value="V-set"/>
    <property type="match status" value="1"/>
</dbReference>
<dbReference type="SMART" id="SM00409">
    <property type="entry name" value="IG"/>
    <property type="match status" value="1"/>
</dbReference>
<dbReference type="SMART" id="SM00408">
    <property type="entry name" value="IGc2"/>
    <property type="match status" value="1"/>
</dbReference>
<dbReference type="SMART" id="SM00406">
    <property type="entry name" value="IGv"/>
    <property type="match status" value="1"/>
</dbReference>
<dbReference type="SUPFAM" id="SSF48726">
    <property type="entry name" value="Immunoglobulin"/>
    <property type="match status" value="2"/>
</dbReference>
<dbReference type="PROSITE" id="PS50835">
    <property type="entry name" value="IG_LIKE"/>
    <property type="match status" value="2"/>
</dbReference>
<reference key="1">
    <citation type="journal article" date="2013" name="Nature">
        <title>The zebrafish reference genome sequence and its relationship to the human genome.</title>
        <authorList>
            <person name="Howe K."/>
            <person name="Clark M.D."/>
            <person name="Torroja C.F."/>
            <person name="Torrance J."/>
            <person name="Berthelot C."/>
            <person name="Muffato M."/>
            <person name="Collins J.E."/>
            <person name="Humphray S."/>
            <person name="McLaren K."/>
            <person name="Matthews L."/>
            <person name="McLaren S."/>
            <person name="Sealy I."/>
            <person name="Caccamo M."/>
            <person name="Churcher C."/>
            <person name="Scott C."/>
            <person name="Barrett J.C."/>
            <person name="Koch R."/>
            <person name="Rauch G.J."/>
            <person name="White S."/>
            <person name="Chow W."/>
            <person name="Kilian B."/>
            <person name="Quintais L.T."/>
            <person name="Guerra-Assuncao J.A."/>
            <person name="Zhou Y."/>
            <person name="Gu Y."/>
            <person name="Yen J."/>
            <person name="Vogel J.H."/>
            <person name="Eyre T."/>
            <person name="Redmond S."/>
            <person name="Banerjee R."/>
            <person name="Chi J."/>
            <person name="Fu B."/>
            <person name="Langley E."/>
            <person name="Maguire S.F."/>
            <person name="Laird G.K."/>
            <person name="Lloyd D."/>
            <person name="Kenyon E."/>
            <person name="Donaldson S."/>
            <person name="Sehra H."/>
            <person name="Almeida-King J."/>
            <person name="Loveland J."/>
            <person name="Trevanion S."/>
            <person name="Jones M."/>
            <person name="Quail M."/>
            <person name="Willey D."/>
            <person name="Hunt A."/>
            <person name="Burton J."/>
            <person name="Sims S."/>
            <person name="McLay K."/>
            <person name="Plumb B."/>
            <person name="Davis J."/>
            <person name="Clee C."/>
            <person name="Oliver K."/>
            <person name="Clark R."/>
            <person name="Riddle C."/>
            <person name="Elliot D."/>
            <person name="Threadgold G."/>
            <person name="Harden G."/>
            <person name="Ware D."/>
            <person name="Begum S."/>
            <person name="Mortimore B."/>
            <person name="Kerry G."/>
            <person name="Heath P."/>
            <person name="Phillimore B."/>
            <person name="Tracey A."/>
            <person name="Corby N."/>
            <person name="Dunn M."/>
            <person name="Johnson C."/>
            <person name="Wood J."/>
            <person name="Clark S."/>
            <person name="Pelan S."/>
            <person name="Griffiths G."/>
            <person name="Smith M."/>
            <person name="Glithero R."/>
            <person name="Howden P."/>
            <person name="Barker N."/>
            <person name="Lloyd C."/>
            <person name="Stevens C."/>
            <person name="Harley J."/>
            <person name="Holt K."/>
            <person name="Panagiotidis G."/>
            <person name="Lovell J."/>
            <person name="Beasley H."/>
            <person name="Henderson C."/>
            <person name="Gordon D."/>
            <person name="Auger K."/>
            <person name="Wright D."/>
            <person name="Collins J."/>
            <person name="Raisen C."/>
            <person name="Dyer L."/>
            <person name="Leung K."/>
            <person name="Robertson L."/>
            <person name="Ambridge K."/>
            <person name="Leongamornlert D."/>
            <person name="McGuire S."/>
            <person name="Gilderthorp R."/>
            <person name="Griffiths C."/>
            <person name="Manthravadi D."/>
            <person name="Nichol S."/>
            <person name="Barker G."/>
            <person name="Whitehead S."/>
            <person name="Kay M."/>
            <person name="Brown J."/>
            <person name="Murnane C."/>
            <person name="Gray E."/>
            <person name="Humphries M."/>
            <person name="Sycamore N."/>
            <person name="Barker D."/>
            <person name="Saunders D."/>
            <person name="Wallis J."/>
            <person name="Babbage A."/>
            <person name="Hammond S."/>
            <person name="Mashreghi-Mohammadi M."/>
            <person name="Barr L."/>
            <person name="Martin S."/>
            <person name="Wray P."/>
            <person name="Ellington A."/>
            <person name="Matthews N."/>
            <person name="Ellwood M."/>
            <person name="Woodmansey R."/>
            <person name="Clark G."/>
            <person name="Cooper J."/>
            <person name="Tromans A."/>
            <person name="Grafham D."/>
            <person name="Skuce C."/>
            <person name="Pandian R."/>
            <person name="Andrews R."/>
            <person name="Harrison E."/>
            <person name="Kimberley A."/>
            <person name="Garnett J."/>
            <person name="Fosker N."/>
            <person name="Hall R."/>
            <person name="Garner P."/>
            <person name="Kelly D."/>
            <person name="Bird C."/>
            <person name="Palmer S."/>
            <person name="Gehring I."/>
            <person name="Berger A."/>
            <person name="Dooley C.M."/>
            <person name="Ersan-Urun Z."/>
            <person name="Eser C."/>
            <person name="Geiger H."/>
            <person name="Geisler M."/>
            <person name="Karotki L."/>
            <person name="Kirn A."/>
            <person name="Konantz J."/>
            <person name="Konantz M."/>
            <person name="Oberlander M."/>
            <person name="Rudolph-Geiger S."/>
            <person name="Teucke M."/>
            <person name="Lanz C."/>
            <person name="Raddatz G."/>
            <person name="Osoegawa K."/>
            <person name="Zhu B."/>
            <person name="Rapp A."/>
            <person name="Widaa S."/>
            <person name="Langford C."/>
            <person name="Yang F."/>
            <person name="Schuster S.C."/>
            <person name="Carter N.P."/>
            <person name="Harrow J."/>
            <person name="Ning Z."/>
            <person name="Herrero J."/>
            <person name="Searle S.M."/>
            <person name="Enright A."/>
            <person name="Geisler R."/>
            <person name="Plasterk R.H."/>
            <person name="Lee C."/>
            <person name="Westerfield M."/>
            <person name="de Jong P.J."/>
            <person name="Zon L.I."/>
            <person name="Postlethwait J.H."/>
            <person name="Nusslein-Volhard C."/>
            <person name="Hubbard T.J."/>
            <person name="Roest Crollius H."/>
            <person name="Rogers J."/>
            <person name="Stemple D.L."/>
        </authorList>
    </citation>
    <scope>NUCLEOTIDE SEQUENCE [LARGE SCALE GENOMIC DNA]</scope>
    <source>
        <strain>Tuebingen</strain>
    </source>
</reference>
<reference key="2">
    <citation type="journal article" date="2011" name="PLoS Biol.">
        <title>Jamb and jamc are essential for vertebrate myocyte fusion.</title>
        <authorList>
            <person name="Powell G.T."/>
            <person name="Wright G.J."/>
        </authorList>
    </citation>
    <scope>FUNCTION</scope>
    <scope>DEVELOPMENTAL STAGE</scope>
    <scope>DISRUPTION PHENOTYPE</scope>
</reference>
<comment type="function">
    <text evidence="1 6">Junctional adhesion protein that mediates heterotypic cell-cell interactions to regulate different cellular processes (By similarity). During myogenesis, it is involved in myocyte fusion through the binding of jam3b on neighboring myocytes (PubMed:22180726).</text>
</comment>
<comment type="subcellular location">
    <subcellularLocation>
        <location evidence="1">Cell membrane</location>
        <topology evidence="1">Single-pass type I membrane protein</topology>
    </subcellularLocation>
    <subcellularLocation>
        <location evidence="1">Cell junction</location>
    </subcellularLocation>
    <subcellularLocation>
        <location evidence="2">Cell junction</location>
        <location evidence="2">Tight junction</location>
    </subcellularLocation>
</comment>
<comment type="developmental stage">
    <text evidence="6">Expressed in the somites of the embryo in a wave along the anterior-posterior axis.</text>
</comment>
<comment type="disruption phenotype">
    <text evidence="6">Morpholino knockdown impairs myocyte fusion during myogenesis.</text>
</comment>
<comment type="similarity">
    <text evidence="8">Belongs to the immunoglobulin superfamily.</text>
</comment>